<comment type="similarity">
    <text evidence="1">Belongs to the bacterial ribosomal protein bL35 family.</text>
</comment>
<accession>C1CRU0</accession>
<gene>
    <name evidence="1" type="primary">rpmI</name>
    <name type="ordered locus">SPT_1243</name>
</gene>
<proteinExistence type="inferred from homology"/>
<name>RL35_STRZT</name>
<feature type="chain" id="PRO_1000194086" description="Large ribosomal subunit protein bL35">
    <location>
        <begin position="1"/>
        <end position="66"/>
    </location>
</feature>
<feature type="region of interest" description="Disordered" evidence="2">
    <location>
        <begin position="1"/>
        <end position="21"/>
    </location>
</feature>
<feature type="compositionally biased region" description="Basic residues" evidence="2">
    <location>
        <begin position="1"/>
        <end position="16"/>
    </location>
</feature>
<evidence type="ECO:0000255" key="1">
    <source>
        <dbReference type="HAMAP-Rule" id="MF_00514"/>
    </source>
</evidence>
<evidence type="ECO:0000256" key="2">
    <source>
        <dbReference type="SAM" id="MobiDB-lite"/>
    </source>
</evidence>
<evidence type="ECO:0000305" key="3"/>
<sequence length="66" mass="7836">MPKQKTHRASAKRFKRTGSGGLKRFRAYTSHRFHGKTKKQRRHLRKASMVHSGDYKRIKAMLTRLK</sequence>
<dbReference type="EMBL" id="CP000921">
    <property type="protein sequence ID" value="ACO24190.1"/>
    <property type="molecule type" value="Genomic_DNA"/>
</dbReference>
<dbReference type="RefSeq" id="WP_001125943.1">
    <property type="nucleotide sequence ID" value="NC_012469.1"/>
</dbReference>
<dbReference type="SMR" id="C1CRU0"/>
<dbReference type="GeneID" id="93739777"/>
<dbReference type="KEGG" id="snt:SPT_1243"/>
<dbReference type="HOGENOM" id="CLU_169643_3_0_9"/>
<dbReference type="GO" id="GO:0022625">
    <property type="term" value="C:cytosolic large ribosomal subunit"/>
    <property type="evidence" value="ECO:0007669"/>
    <property type="project" value="TreeGrafter"/>
</dbReference>
<dbReference type="GO" id="GO:0003735">
    <property type="term" value="F:structural constituent of ribosome"/>
    <property type="evidence" value="ECO:0007669"/>
    <property type="project" value="InterPro"/>
</dbReference>
<dbReference type="GO" id="GO:0006412">
    <property type="term" value="P:translation"/>
    <property type="evidence" value="ECO:0007669"/>
    <property type="project" value="UniProtKB-UniRule"/>
</dbReference>
<dbReference type="FunFam" id="4.10.410.60:FF:000001">
    <property type="entry name" value="50S ribosomal protein L35"/>
    <property type="match status" value="1"/>
</dbReference>
<dbReference type="Gene3D" id="4.10.410.60">
    <property type="match status" value="1"/>
</dbReference>
<dbReference type="HAMAP" id="MF_00514">
    <property type="entry name" value="Ribosomal_bL35"/>
    <property type="match status" value="1"/>
</dbReference>
<dbReference type="InterPro" id="IPR001706">
    <property type="entry name" value="Ribosomal_bL35"/>
</dbReference>
<dbReference type="InterPro" id="IPR021137">
    <property type="entry name" value="Ribosomal_bL35-like"/>
</dbReference>
<dbReference type="InterPro" id="IPR018265">
    <property type="entry name" value="Ribosomal_bL35_CS"/>
</dbReference>
<dbReference type="InterPro" id="IPR037229">
    <property type="entry name" value="Ribosomal_bL35_sf"/>
</dbReference>
<dbReference type="NCBIfam" id="TIGR00001">
    <property type="entry name" value="rpmI_bact"/>
    <property type="match status" value="1"/>
</dbReference>
<dbReference type="PANTHER" id="PTHR33343">
    <property type="entry name" value="54S RIBOSOMAL PROTEIN BL35M"/>
    <property type="match status" value="1"/>
</dbReference>
<dbReference type="PANTHER" id="PTHR33343:SF1">
    <property type="entry name" value="LARGE RIBOSOMAL SUBUNIT PROTEIN BL35M"/>
    <property type="match status" value="1"/>
</dbReference>
<dbReference type="Pfam" id="PF01632">
    <property type="entry name" value="Ribosomal_L35p"/>
    <property type="match status" value="1"/>
</dbReference>
<dbReference type="PRINTS" id="PR00064">
    <property type="entry name" value="RIBOSOMALL35"/>
</dbReference>
<dbReference type="SUPFAM" id="SSF143034">
    <property type="entry name" value="L35p-like"/>
    <property type="match status" value="1"/>
</dbReference>
<dbReference type="PROSITE" id="PS00936">
    <property type="entry name" value="RIBOSOMAL_L35"/>
    <property type="match status" value="1"/>
</dbReference>
<organism>
    <name type="scientific">Streptococcus pneumoniae (strain Taiwan19F-14)</name>
    <dbReference type="NCBI Taxonomy" id="487213"/>
    <lineage>
        <taxon>Bacteria</taxon>
        <taxon>Bacillati</taxon>
        <taxon>Bacillota</taxon>
        <taxon>Bacilli</taxon>
        <taxon>Lactobacillales</taxon>
        <taxon>Streptococcaceae</taxon>
        <taxon>Streptococcus</taxon>
    </lineage>
</organism>
<protein>
    <recommendedName>
        <fullName evidence="1">Large ribosomal subunit protein bL35</fullName>
    </recommendedName>
    <alternativeName>
        <fullName evidence="3">50S ribosomal protein L35</fullName>
    </alternativeName>
</protein>
<keyword id="KW-0687">Ribonucleoprotein</keyword>
<keyword id="KW-0689">Ribosomal protein</keyword>
<reference key="1">
    <citation type="journal article" date="2010" name="Genome Biol.">
        <title>Structure and dynamics of the pan-genome of Streptococcus pneumoniae and closely related species.</title>
        <authorList>
            <person name="Donati C."/>
            <person name="Hiller N.L."/>
            <person name="Tettelin H."/>
            <person name="Muzzi A."/>
            <person name="Croucher N.J."/>
            <person name="Angiuoli S.V."/>
            <person name="Oggioni M."/>
            <person name="Dunning Hotopp J.C."/>
            <person name="Hu F.Z."/>
            <person name="Riley D.R."/>
            <person name="Covacci A."/>
            <person name="Mitchell T.J."/>
            <person name="Bentley S.D."/>
            <person name="Kilian M."/>
            <person name="Ehrlich G.D."/>
            <person name="Rappuoli R."/>
            <person name="Moxon E.R."/>
            <person name="Masignani V."/>
        </authorList>
    </citation>
    <scope>NUCLEOTIDE SEQUENCE [LARGE SCALE GENOMIC DNA]</scope>
    <source>
        <strain>Taiwan19F-14</strain>
    </source>
</reference>